<organism>
    <name type="scientific">Methylobacillus flagellatus (strain ATCC 51484 / DSM 6875 / VKM B-1610 / KT)</name>
    <dbReference type="NCBI Taxonomy" id="265072"/>
    <lineage>
        <taxon>Bacteria</taxon>
        <taxon>Pseudomonadati</taxon>
        <taxon>Pseudomonadota</taxon>
        <taxon>Betaproteobacteria</taxon>
        <taxon>Nitrosomonadales</taxon>
        <taxon>Methylophilaceae</taxon>
        <taxon>Methylobacillus</taxon>
    </lineage>
</organism>
<feature type="signal peptide" evidence="1">
    <location>
        <begin position="1"/>
        <end position="26"/>
    </location>
</feature>
<feature type="chain" id="PRO_0000259057" description="Tol-Pal system protein TolB" evidence="1">
    <location>
        <begin position="27"/>
        <end position="433"/>
    </location>
</feature>
<sequence>MNKLRLFRSFFAFLLPFGMATGAAHGALTVEIVGGAAQQIPIAVVPFAQQGVIPGQQDTIANVIGADLRRSGLFRVLETRGVANQPSDISQVNYQDWAAIQAQALTIGNIETLPGNRLKVSFRLLDVYKQSQLVGMEYNITPSQLRLTAHKIADVIYQKLTGEQGVFATRIAYVSKSGGRYALQVADSDGYNPQTVVSSAEPIISPVWSPDGTKLAYVSFEKKKPIIYVQSLVSGQRTVLANFKGNNSAPAWSPDGKRLAIVLTHAANSQIYSINADGTGLQQLTRTTAIDTEPTWSPDGRYIYFTSDRGGSPQIYRMPSSGGEASRMTFEGSYVVSPRLSPDGKSLAYIRRDGGQFRVALQDLQTGQVQVLSDGPKDESPSFAPNGRMLLHATRVGGRGALAAVSADGRVKQRLSESGGDVREPAWGPIISQ</sequence>
<name>TOLB_METFK</name>
<keyword id="KW-0131">Cell cycle</keyword>
<keyword id="KW-0132">Cell division</keyword>
<keyword id="KW-0574">Periplasm</keyword>
<keyword id="KW-1185">Reference proteome</keyword>
<keyword id="KW-0732">Signal</keyword>
<protein>
    <recommendedName>
        <fullName evidence="1">Tol-Pal system protein TolB</fullName>
    </recommendedName>
</protein>
<reference key="1">
    <citation type="submission" date="2006-03" db="EMBL/GenBank/DDBJ databases">
        <title>Complete sequence of Methylobacillus flagellatus KT.</title>
        <authorList>
            <consortium name="US DOE Joint Genome Institute"/>
            <person name="Copeland A."/>
            <person name="Lucas S."/>
            <person name="Lapidus A."/>
            <person name="Barry K."/>
            <person name="Detter J.C."/>
            <person name="Glavina del Rio T."/>
            <person name="Hammon N."/>
            <person name="Israni S."/>
            <person name="Dalin E."/>
            <person name="Tice H."/>
            <person name="Pitluck S."/>
            <person name="Brettin T."/>
            <person name="Bruce D."/>
            <person name="Han C."/>
            <person name="Tapia R."/>
            <person name="Saunders E."/>
            <person name="Gilna P."/>
            <person name="Schmutz J."/>
            <person name="Larimer F."/>
            <person name="Land M."/>
            <person name="Kyrpides N."/>
            <person name="Anderson I."/>
            <person name="Richardson P."/>
        </authorList>
    </citation>
    <scope>NUCLEOTIDE SEQUENCE [LARGE SCALE GENOMIC DNA]</scope>
    <source>
        <strain>ATCC 51484 / DSM 6875 / VKM B-1610 / KT</strain>
    </source>
</reference>
<evidence type="ECO:0000255" key="1">
    <source>
        <dbReference type="HAMAP-Rule" id="MF_00671"/>
    </source>
</evidence>
<evidence type="ECO:0000305" key="2"/>
<dbReference type="EMBL" id="CP000284">
    <property type="protein sequence ID" value="ABE50606.1"/>
    <property type="status" value="ALT_INIT"/>
    <property type="molecule type" value="Genomic_DNA"/>
</dbReference>
<dbReference type="RefSeq" id="WP_048811729.1">
    <property type="nucleotide sequence ID" value="NC_007947.1"/>
</dbReference>
<dbReference type="SMR" id="Q1GYT1"/>
<dbReference type="STRING" id="265072.Mfla_2339"/>
<dbReference type="KEGG" id="mfa:Mfla_2339"/>
<dbReference type="eggNOG" id="COG0823">
    <property type="taxonomic scope" value="Bacteria"/>
</dbReference>
<dbReference type="HOGENOM" id="CLU_047123_0_0_4"/>
<dbReference type="OrthoDB" id="9802240at2"/>
<dbReference type="Proteomes" id="UP000002440">
    <property type="component" value="Chromosome"/>
</dbReference>
<dbReference type="GO" id="GO:0042597">
    <property type="term" value="C:periplasmic space"/>
    <property type="evidence" value="ECO:0007669"/>
    <property type="project" value="UniProtKB-SubCell"/>
</dbReference>
<dbReference type="GO" id="GO:0051301">
    <property type="term" value="P:cell division"/>
    <property type="evidence" value="ECO:0007669"/>
    <property type="project" value="UniProtKB-UniRule"/>
</dbReference>
<dbReference type="GO" id="GO:0017038">
    <property type="term" value="P:protein import"/>
    <property type="evidence" value="ECO:0007669"/>
    <property type="project" value="InterPro"/>
</dbReference>
<dbReference type="Gene3D" id="2.120.10.30">
    <property type="entry name" value="TolB, C-terminal domain"/>
    <property type="match status" value="1"/>
</dbReference>
<dbReference type="Gene3D" id="3.40.50.10070">
    <property type="entry name" value="TolB, N-terminal domain"/>
    <property type="match status" value="1"/>
</dbReference>
<dbReference type="HAMAP" id="MF_00671">
    <property type="entry name" value="TolB"/>
    <property type="match status" value="1"/>
</dbReference>
<dbReference type="InterPro" id="IPR011042">
    <property type="entry name" value="6-blade_b-propeller_TolB-like"/>
</dbReference>
<dbReference type="InterPro" id="IPR011659">
    <property type="entry name" value="PD40"/>
</dbReference>
<dbReference type="InterPro" id="IPR014167">
    <property type="entry name" value="Tol-Pal_TolB"/>
</dbReference>
<dbReference type="InterPro" id="IPR007195">
    <property type="entry name" value="TolB_N"/>
</dbReference>
<dbReference type="NCBIfam" id="TIGR02800">
    <property type="entry name" value="propeller_TolB"/>
    <property type="match status" value="1"/>
</dbReference>
<dbReference type="PANTHER" id="PTHR36842:SF1">
    <property type="entry name" value="PROTEIN TOLB"/>
    <property type="match status" value="1"/>
</dbReference>
<dbReference type="PANTHER" id="PTHR36842">
    <property type="entry name" value="PROTEIN TOLB HOMOLOG"/>
    <property type="match status" value="1"/>
</dbReference>
<dbReference type="Pfam" id="PF07676">
    <property type="entry name" value="PD40"/>
    <property type="match status" value="4"/>
</dbReference>
<dbReference type="Pfam" id="PF04052">
    <property type="entry name" value="TolB_N"/>
    <property type="match status" value="1"/>
</dbReference>
<dbReference type="SUPFAM" id="SSF52964">
    <property type="entry name" value="TolB, N-terminal domain"/>
    <property type="match status" value="1"/>
</dbReference>
<dbReference type="SUPFAM" id="SSF69304">
    <property type="entry name" value="Tricorn protease N-terminal domain"/>
    <property type="match status" value="1"/>
</dbReference>
<comment type="function">
    <text evidence="1">Part of the Tol-Pal system, which plays a role in outer membrane invagination during cell division and is important for maintaining outer membrane integrity.</text>
</comment>
<comment type="subunit">
    <text evidence="1">The Tol-Pal system is composed of five core proteins: the inner membrane proteins TolA, TolQ and TolR, the periplasmic protein TolB and the outer membrane protein Pal. They form a network linking the inner and outer membranes and the peptidoglycan layer.</text>
</comment>
<comment type="subcellular location">
    <subcellularLocation>
        <location evidence="1">Periplasm</location>
    </subcellularLocation>
</comment>
<comment type="similarity">
    <text evidence="1">Belongs to the TolB family.</text>
</comment>
<comment type="sequence caution" evidence="2">
    <conflict type="erroneous initiation">
        <sequence resource="EMBL-CDS" id="ABE50606"/>
    </conflict>
</comment>
<gene>
    <name evidence="1" type="primary">tolB</name>
    <name type="ordered locus">Mfla_2339</name>
</gene>
<proteinExistence type="inferred from homology"/>
<accession>Q1GYT1</accession>